<comment type="function">
    <text evidence="1">Cell wall formation.</text>
</comment>
<comment type="catalytic activity">
    <reaction evidence="1">
        <text>UDP-N-acetyl-alpha-D-muramate + NADP(+) = UDP-N-acetyl-3-O-(1-carboxyvinyl)-alpha-D-glucosamine + NADPH + H(+)</text>
        <dbReference type="Rhea" id="RHEA:12248"/>
        <dbReference type="ChEBI" id="CHEBI:15378"/>
        <dbReference type="ChEBI" id="CHEBI:57783"/>
        <dbReference type="ChEBI" id="CHEBI:58349"/>
        <dbReference type="ChEBI" id="CHEBI:68483"/>
        <dbReference type="ChEBI" id="CHEBI:70757"/>
        <dbReference type="EC" id="1.3.1.98"/>
    </reaction>
</comment>
<comment type="cofactor">
    <cofactor evidence="1">
        <name>FAD</name>
        <dbReference type="ChEBI" id="CHEBI:57692"/>
    </cofactor>
</comment>
<comment type="pathway">
    <text evidence="1">Cell wall biogenesis; peptidoglycan biosynthesis.</text>
</comment>
<comment type="subcellular location">
    <subcellularLocation>
        <location evidence="1">Cytoplasm</location>
    </subcellularLocation>
</comment>
<comment type="similarity">
    <text evidence="1">Belongs to the MurB family.</text>
</comment>
<name>MURB_PARPJ</name>
<proteinExistence type="inferred from homology"/>
<evidence type="ECO:0000255" key="1">
    <source>
        <dbReference type="HAMAP-Rule" id="MF_00037"/>
    </source>
</evidence>
<feature type="chain" id="PRO_1000191406" description="UDP-N-acetylenolpyruvoylglucosamine reductase">
    <location>
        <begin position="1"/>
        <end position="346"/>
    </location>
</feature>
<feature type="domain" description="FAD-binding PCMH-type" evidence="1">
    <location>
        <begin position="23"/>
        <end position="194"/>
    </location>
</feature>
<feature type="active site" evidence="1">
    <location>
        <position position="170"/>
    </location>
</feature>
<feature type="active site" description="Proton donor" evidence="1">
    <location>
        <position position="246"/>
    </location>
</feature>
<feature type="active site" evidence="1">
    <location>
        <position position="342"/>
    </location>
</feature>
<protein>
    <recommendedName>
        <fullName evidence="1">UDP-N-acetylenolpyruvoylglucosamine reductase</fullName>
        <ecNumber evidence="1">1.3.1.98</ecNumber>
    </recommendedName>
    <alternativeName>
        <fullName evidence="1">UDP-N-acetylmuramate dehydrogenase</fullName>
    </alternativeName>
</protein>
<dbReference type="EC" id="1.3.1.98" evidence="1"/>
<dbReference type="EMBL" id="CP001052">
    <property type="protein sequence ID" value="ACD17599.1"/>
    <property type="molecule type" value="Genomic_DNA"/>
</dbReference>
<dbReference type="RefSeq" id="WP_012434169.1">
    <property type="nucleotide sequence ID" value="NC_010681.1"/>
</dbReference>
<dbReference type="SMR" id="B2SY64"/>
<dbReference type="STRING" id="398527.Bphyt_3207"/>
<dbReference type="KEGG" id="bpy:Bphyt_3207"/>
<dbReference type="eggNOG" id="COG0812">
    <property type="taxonomic scope" value="Bacteria"/>
</dbReference>
<dbReference type="HOGENOM" id="CLU_035304_0_0_4"/>
<dbReference type="OrthoDB" id="9804753at2"/>
<dbReference type="UniPathway" id="UPA00219"/>
<dbReference type="Proteomes" id="UP000001739">
    <property type="component" value="Chromosome 1"/>
</dbReference>
<dbReference type="GO" id="GO:0005829">
    <property type="term" value="C:cytosol"/>
    <property type="evidence" value="ECO:0007669"/>
    <property type="project" value="TreeGrafter"/>
</dbReference>
<dbReference type="GO" id="GO:0071949">
    <property type="term" value="F:FAD binding"/>
    <property type="evidence" value="ECO:0007669"/>
    <property type="project" value="InterPro"/>
</dbReference>
<dbReference type="GO" id="GO:0008762">
    <property type="term" value="F:UDP-N-acetylmuramate dehydrogenase activity"/>
    <property type="evidence" value="ECO:0007669"/>
    <property type="project" value="UniProtKB-UniRule"/>
</dbReference>
<dbReference type="GO" id="GO:0051301">
    <property type="term" value="P:cell division"/>
    <property type="evidence" value="ECO:0007669"/>
    <property type="project" value="UniProtKB-KW"/>
</dbReference>
<dbReference type="GO" id="GO:0071555">
    <property type="term" value="P:cell wall organization"/>
    <property type="evidence" value="ECO:0007669"/>
    <property type="project" value="UniProtKB-KW"/>
</dbReference>
<dbReference type="GO" id="GO:0009252">
    <property type="term" value="P:peptidoglycan biosynthetic process"/>
    <property type="evidence" value="ECO:0007669"/>
    <property type="project" value="UniProtKB-UniRule"/>
</dbReference>
<dbReference type="GO" id="GO:0008360">
    <property type="term" value="P:regulation of cell shape"/>
    <property type="evidence" value="ECO:0007669"/>
    <property type="project" value="UniProtKB-KW"/>
</dbReference>
<dbReference type="Gene3D" id="3.30.465.10">
    <property type="match status" value="1"/>
</dbReference>
<dbReference type="Gene3D" id="3.90.78.10">
    <property type="entry name" value="UDP-N-acetylenolpyruvoylglucosamine reductase, C-terminal domain"/>
    <property type="match status" value="1"/>
</dbReference>
<dbReference type="Gene3D" id="3.30.43.10">
    <property type="entry name" value="Uridine Diphospho-n-acetylenolpyruvylglucosamine Reductase, domain 2"/>
    <property type="match status" value="1"/>
</dbReference>
<dbReference type="HAMAP" id="MF_00037">
    <property type="entry name" value="MurB"/>
    <property type="match status" value="1"/>
</dbReference>
<dbReference type="InterPro" id="IPR016166">
    <property type="entry name" value="FAD-bd_PCMH"/>
</dbReference>
<dbReference type="InterPro" id="IPR036318">
    <property type="entry name" value="FAD-bd_PCMH-like_sf"/>
</dbReference>
<dbReference type="InterPro" id="IPR016167">
    <property type="entry name" value="FAD-bd_PCMH_sub1"/>
</dbReference>
<dbReference type="InterPro" id="IPR016169">
    <property type="entry name" value="FAD-bd_PCMH_sub2"/>
</dbReference>
<dbReference type="InterPro" id="IPR003170">
    <property type="entry name" value="MurB"/>
</dbReference>
<dbReference type="InterPro" id="IPR011601">
    <property type="entry name" value="MurB_C"/>
</dbReference>
<dbReference type="InterPro" id="IPR036635">
    <property type="entry name" value="MurB_C_sf"/>
</dbReference>
<dbReference type="InterPro" id="IPR006094">
    <property type="entry name" value="Oxid_FAD_bind_N"/>
</dbReference>
<dbReference type="NCBIfam" id="TIGR00179">
    <property type="entry name" value="murB"/>
    <property type="match status" value="1"/>
</dbReference>
<dbReference type="NCBIfam" id="NF000755">
    <property type="entry name" value="PRK00046.1"/>
    <property type="match status" value="1"/>
</dbReference>
<dbReference type="NCBIfam" id="NF010478">
    <property type="entry name" value="PRK13903.1"/>
    <property type="match status" value="1"/>
</dbReference>
<dbReference type="PANTHER" id="PTHR21071">
    <property type="entry name" value="UDP-N-ACETYLENOLPYRUVOYLGLUCOSAMINE REDUCTASE"/>
    <property type="match status" value="1"/>
</dbReference>
<dbReference type="PANTHER" id="PTHR21071:SF4">
    <property type="entry name" value="UDP-N-ACETYLENOLPYRUVOYLGLUCOSAMINE REDUCTASE"/>
    <property type="match status" value="1"/>
</dbReference>
<dbReference type="Pfam" id="PF01565">
    <property type="entry name" value="FAD_binding_4"/>
    <property type="match status" value="1"/>
</dbReference>
<dbReference type="Pfam" id="PF02873">
    <property type="entry name" value="MurB_C"/>
    <property type="match status" value="1"/>
</dbReference>
<dbReference type="SUPFAM" id="SSF56176">
    <property type="entry name" value="FAD-binding/transporter-associated domain-like"/>
    <property type="match status" value="1"/>
</dbReference>
<dbReference type="SUPFAM" id="SSF56194">
    <property type="entry name" value="Uridine diphospho-N-Acetylenolpyruvylglucosamine reductase, MurB, C-terminal domain"/>
    <property type="match status" value="1"/>
</dbReference>
<dbReference type="PROSITE" id="PS51387">
    <property type="entry name" value="FAD_PCMH"/>
    <property type="match status" value="1"/>
</dbReference>
<keyword id="KW-0131">Cell cycle</keyword>
<keyword id="KW-0132">Cell division</keyword>
<keyword id="KW-0133">Cell shape</keyword>
<keyword id="KW-0961">Cell wall biogenesis/degradation</keyword>
<keyword id="KW-0963">Cytoplasm</keyword>
<keyword id="KW-0274">FAD</keyword>
<keyword id="KW-0285">Flavoprotein</keyword>
<keyword id="KW-0521">NADP</keyword>
<keyword id="KW-0560">Oxidoreductase</keyword>
<keyword id="KW-0573">Peptidoglycan synthesis</keyword>
<sequence length="346" mass="37439">MSQFDSAAFIAGFPLKAHNTFGFDVRAQFACRIEREEQLMAAVRDPRAAGLPRLVLGGGSNVVLTGDFGGLVLLIALRGRRVAREDNDAWYVEAAGGEPWHEFVGWTLAQGLPGLENLALIPGTVGAAPIQNIGAYGLEMVERFASLRAVELATGDVVEMDAHACRFGYRDSFFKREGRDRFVITSVTFRLPKVWQPRAGYADLARELAAKGHADTPPTAQAIFDAVVAVRRAKLPDPLELGNAGSFFKNPVVEAAQFEALKTTEPEIVSYLQPDGRVKLAAGWLIDRCGWKGRAMGAAAVHERQALVLVNRGGASGTEVLALAKAIQRDVLERFGVELEAEPVCL</sequence>
<accession>B2SY64</accession>
<organism>
    <name type="scientific">Paraburkholderia phytofirmans (strain DSM 17436 / LMG 22146 / PsJN)</name>
    <name type="common">Burkholderia phytofirmans</name>
    <dbReference type="NCBI Taxonomy" id="398527"/>
    <lineage>
        <taxon>Bacteria</taxon>
        <taxon>Pseudomonadati</taxon>
        <taxon>Pseudomonadota</taxon>
        <taxon>Betaproteobacteria</taxon>
        <taxon>Burkholderiales</taxon>
        <taxon>Burkholderiaceae</taxon>
        <taxon>Paraburkholderia</taxon>
    </lineage>
</organism>
<gene>
    <name evidence="1" type="primary">murB</name>
    <name type="ordered locus">Bphyt_3207</name>
</gene>
<reference key="1">
    <citation type="journal article" date="2011" name="J. Bacteriol.">
        <title>Complete genome sequence of the plant growth-promoting endophyte Burkholderia phytofirmans strain PsJN.</title>
        <authorList>
            <person name="Weilharter A."/>
            <person name="Mitter B."/>
            <person name="Shin M.V."/>
            <person name="Chain P.S."/>
            <person name="Nowak J."/>
            <person name="Sessitsch A."/>
        </authorList>
    </citation>
    <scope>NUCLEOTIDE SEQUENCE [LARGE SCALE GENOMIC DNA]</scope>
    <source>
        <strain>DSM 17436 / LMG 22146 / PsJN</strain>
    </source>
</reference>